<proteinExistence type="inferred from homology"/>
<dbReference type="EMBL" id="DS480402">
    <property type="protein sequence ID" value="EDO17540.1"/>
    <property type="molecule type" value="Genomic_DNA"/>
</dbReference>
<dbReference type="RefSeq" id="XP_001645398.1">
    <property type="nucleotide sequence ID" value="XM_001645348.1"/>
</dbReference>
<dbReference type="SMR" id="A7TJJ7"/>
<dbReference type="FunCoup" id="A7TJJ7">
    <property type="interactions" value="1470"/>
</dbReference>
<dbReference type="STRING" id="436907.A7TJJ7"/>
<dbReference type="GeneID" id="5545762"/>
<dbReference type="KEGG" id="vpo:Kpol_534p19"/>
<dbReference type="eggNOG" id="ENOG502QSQX">
    <property type="taxonomic scope" value="Eukaryota"/>
</dbReference>
<dbReference type="HOGENOM" id="CLU_038734_0_0_1"/>
<dbReference type="InParanoid" id="A7TJJ7"/>
<dbReference type="OMA" id="HFMANIN"/>
<dbReference type="OrthoDB" id="6088208at2759"/>
<dbReference type="PhylomeDB" id="A7TJJ7"/>
<dbReference type="Proteomes" id="UP000000267">
    <property type="component" value="Unassembled WGS sequence"/>
</dbReference>
<dbReference type="GO" id="GO:0005789">
    <property type="term" value="C:endoplasmic reticulum membrane"/>
    <property type="evidence" value="ECO:0007669"/>
    <property type="project" value="UniProtKB-SubCell"/>
</dbReference>
<dbReference type="GO" id="GO:0003723">
    <property type="term" value="F:RNA binding"/>
    <property type="evidence" value="ECO:0007669"/>
    <property type="project" value="UniProtKB-KW"/>
</dbReference>
<dbReference type="GO" id="GO:0048309">
    <property type="term" value="P:endoplasmic reticulum inheritance"/>
    <property type="evidence" value="ECO:0007669"/>
    <property type="project" value="InterPro"/>
</dbReference>
<dbReference type="GO" id="GO:0051028">
    <property type="term" value="P:mRNA transport"/>
    <property type="evidence" value="ECO:0007669"/>
    <property type="project" value="UniProtKB-KW"/>
</dbReference>
<dbReference type="InterPro" id="IPR031398">
    <property type="entry name" value="She3"/>
</dbReference>
<dbReference type="Pfam" id="PF17078">
    <property type="entry name" value="SHE3"/>
    <property type="match status" value="1"/>
</dbReference>
<accession>A7TJJ7</accession>
<protein>
    <recommendedName>
        <fullName>SWI5-dependent HO expression protein 3</fullName>
    </recommendedName>
</protein>
<name>SHE3_VANPO</name>
<gene>
    <name type="primary">SHE3</name>
    <name type="ORF">Kpol_534p19</name>
</gene>
<reference key="1">
    <citation type="journal article" date="2007" name="Proc. Natl. Acad. Sci. U.S.A.">
        <title>Independent sorting-out of thousands of duplicated gene pairs in two yeast species descended from a whole-genome duplication.</title>
        <authorList>
            <person name="Scannell D.R."/>
            <person name="Frank A.C."/>
            <person name="Conant G.C."/>
            <person name="Byrne K.P."/>
            <person name="Woolfit M."/>
            <person name="Wolfe K.H."/>
        </authorList>
    </citation>
    <scope>NUCLEOTIDE SEQUENCE [LARGE SCALE GENOMIC DNA]</scope>
    <source>
        <strain>ATCC 22028 / DSM 70294 / BCRC 21397 / CBS 2163 / NBRC 10782 / NRRL Y-8283 / UCD 57-17</strain>
    </source>
</reference>
<keyword id="KW-0175">Coiled coil</keyword>
<keyword id="KW-0256">Endoplasmic reticulum</keyword>
<keyword id="KW-0472">Membrane</keyword>
<keyword id="KW-0509">mRNA transport</keyword>
<keyword id="KW-1185">Reference proteome</keyword>
<keyword id="KW-0694">RNA-binding</keyword>
<keyword id="KW-0813">Transport</keyword>
<feature type="chain" id="PRO_0000408936" description="SWI5-dependent HO expression protein 3">
    <location>
        <begin position="1"/>
        <end position="498"/>
    </location>
</feature>
<feature type="region of interest" description="Disordered" evidence="3">
    <location>
        <begin position="1"/>
        <end position="82"/>
    </location>
</feature>
<feature type="region of interest" description="Disordered" evidence="3">
    <location>
        <begin position="328"/>
        <end position="361"/>
    </location>
</feature>
<feature type="region of interest" description="Disordered" evidence="3">
    <location>
        <begin position="394"/>
        <end position="498"/>
    </location>
</feature>
<feature type="coiled-coil region" evidence="2">
    <location>
        <begin position="86"/>
        <end position="272"/>
    </location>
</feature>
<feature type="compositionally biased region" description="Basic and acidic residues" evidence="3">
    <location>
        <begin position="1"/>
        <end position="10"/>
    </location>
</feature>
<feature type="compositionally biased region" description="Low complexity" evidence="3">
    <location>
        <begin position="44"/>
        <end position="82"/>
    </location>
</feature>
<feature type="compositionally biased region" description="Low complexity" evidence="3">
    <location>
        <begin position="328"/>
        <end position="360"/>
    </location>
</feature>
<feature type="compositionally biased region" description="Polar residues" evidence="3">
    <location>
        <begin position="397"/>
        <end position="406"/>
    </location>
</feature>
<feature type="compositionally biased region" description="Polar residues" evidence="3">
    <location>
        <begin position="425"/>
        <end position="449"/>
    </location>
</feature>
<feature type="compositionally biased region" description="Low complexity" evidence="3">
    <location>
        <begin position="450"/>
        <end position="471"/>
    </location>
</feature>
<comment type="function">
    <text evidence="1">RNA-binding protein that binds specific mRNAs including the ASH1 mRNA, coding for a repressor of the HO endonuclease. Part of the mRNA localization machinery that restricts accumulation of certain proteins to the bud and in the daughter cell. Required for the delivery of cortical endoplasmic reticulum into the emerging bud (By similarity).</text>
</comment>
<comment type="subcellular location">
    <subcellularLocation>
        <location evidence="1">Endoplasmic reticulum membrane</location>
        <topology evidence="1">Peripheral membrane protein</topology>
    </subcellularLocation>
</comment>
<comment type="similarity">
    <text evidence="4">Belongs to the SHE3 family.</text>
</comment>
<evidence type="ECO:0000250" key="1"/>
<evidence type="ECO:0000255" key="2"/>
<evidence type="ECO:0000256" key="3">
    <source>
        <dbReference type="SAM" id="MobiDB-lite"/>
    </source>
</evidence>
<evidence type="ECO:0000305" key="4"/>
<organism>
    <name type="scientific">Vanderwaltozyma polyspora (strain ATCC 22028 / DSM 70294 / BCRC 21397 / CBS 2163 / NBRC 10782 / NRRL Y-8283 / UCD 57-17)</name>
    <name type="common">Kluyveromyces polysporus</name>
    <dbReference type="NCBI Taxonomy" id="436907"/>
    <lineage>
        <taxon>Eukaryota</taxon>
        <taxon>Fungi</taxon>
        <taxon>Dikarya</taxon>
        <taxon>Ascomycota</taxon>
        <taxon>Saccharomycotina</taxon>
        <taxon>Saccharomycetes</taxon>
        <taxon>Saccharomycetales</taxon>
        <taxon>Saccharomycetaceae</taxon>
        <taxon>Vanderwaltozyma</taxon>
    </lineage>
</organism>
<sequence length="498" mass="55690">MSLEDSRISNEDDSELLPPNKVVSSHGVFMASMNGSPQKIMRPSSVSGGSVNGSVSGSSQIGSGPNSNNNNNSSNNNNNSGSISSTKVIEALHEQIDALTNTNLKLTVQSQGLLEKLENSQQREGKFMENIASLRHENDNLSTMLNRKTRKLKDTELELEELKEKFDKITTEKKVLDDDLNKTSASETKLKEEMSMIENQYNSLIDSHEYYKDKYLQEINQLKRSLEDLTTEQENYLKRTNENNKLVEEKIDNYNNSFNQLKEINESLNNIIITKCESAIQELDLPNWVNLYKESKILVIDYAQQMNLEIPNNFKELVRDRTLEILESRSTSMSSQSSSENRQQFNNNNNNSHNQSSGNEEPLRMVKLRTVSPNSFNNSGSSLPSHIKRSSFYGGTKSLSSSNSGIPGTLPGVKRSGSLRKPSSRLPSTNTEPFSSPSSPSLNGTNKFGQNQNQASNSNSNPSQHNNSNIQLPGSRVSSVSHNPMHRKKRNSMMFHGN</sequence>